<evidence type="ECO:0000255" key="1">
    <source>
        <dbReference type="HAMAP-Rule" id="MF_00668"/>
    </source>
</evidence>
<accession>D8KN09</accession>
<dbReference type="EC" id="6.2.1.14" evidence="1"/>
<dbReference type="EMBL" id="CP002097">
    <property type="protein sequence ID" value="ADK28976.1"/>
    <property type="molecule type" value="Genomic_DNA"/>
</dbReference>
<dbReference type="RefSeq" id="WP_013242038.1">
    <property type="nucleotide sequence ID" value="NC_014329.2"/>
</dbReference>
<dbReference type="SMR" id="D8KN09"/>
<dbReference type="GeneID" id="93974470"/>
<dbReference type="KEGG" id="cpu:CPFRC_05945"/>
<dbReference type="HOGENOM" id="CLU_076858_0_0_11"/>
<dbReference type="UniPathway" id="UPA00999">
    <property type="reaction ID" value="UER00351"/>
</dbReference>
<dbReference type="GO" id="GO:0042410">
    <property type="term" value="F:6-carboxyhexanoate-CoA ligase activity"/>
    <property type="evidence" value="ECO:0007669"/>
    <property type="project" value="UniProtKB-UniRule"/>
</dbReference>
<dbReference type="GO" id="GO:0005524">
    <property type="term" value="F:ATP binding"/>
    <property type="evidence" value="ECO:0007669"/>
    <property type="project" value="UniProtKB-KW"/>
</dbReference>
<dbReference type="GO" id="GO:0000287">
    <property type="term" value="F:magnesium ion binding"/>
    <property type="evidence" value="ECO:0007669"/>
    <property type="project" value="UniProtKB-UniRule"/>
</dbReference>
<dbReference type="GO" id="GO:0009102">
    <property type="term" value="P:biotin biosynthetic process"/>
    <property type="evidence" value="ECO:0007669"/>
    <property type="project" value="UniProtKB-UniRule"/>
</dbReference>
<dbReference type="HAMAP" id="MF_00668">
    <property type="entry name" value="BioW"/>
    <property type="match status" value="1"/>
</dbReference>
<dbReference type="InterPro" id="IPR005499">
    <property type="entry name" value="BioW"/>
</dbReference>
<dbReference type="NCBIfam" id="NF002360">
    <property type="entry name" value="PRK01322.1"/>
    <property type="match status" value="1"/>
</dbReference>
<dbReference type="Pfam" id="PF03744">
    <property type="entry name" value="BioW"/>
    <property type="match status" value="1"/>
</dbReference>
<comment type="function">
    <text evidence="1">Catalyzes the transformation of pimelate into pimeloyl-CoA with concomitant hydrolysis of ATP to AMP.</text>
</comment>
<comment type="catalytic activity">
    <reaction evidence="1">
        <text>heptanedioate + ATP + CoA = 6-carboxyhexanoyl-CoA + AMP + diphosphate</text>
        <dbReference type="Rhea" id="RHEA:14781"/>
        <dbReference type="ChEBI" id="CHEBI:30616"/>
        <dbReference type="ChEBI" id="CHEBI:33019"/>
        <dbReference type="ChEBI" id="CHEBI:36165"/>
        <dbReference type="ChEBI" id="CHEBI:57287"/>
        <dbReference type="ChEBI" id="CHEBI:57360"/>
        <dbReference type="ChEBI" id="CHEBI:456215"/>
        <dbReference type="EC" id="6.2.1.14"/>
    </reaction>
</comment>
<comment type="cofactor">
    <cofactor evidence="1">
        <name>Mg(2+)</name>
        <dbReference type="ChEBI" id="CHEBI:18420"/>
    </cofactor>
</comment>
<comment type="pathway">
    <text evidence="1">Metabolic intermediate metabolism; pimeloyl-CoA biosynthesis; pimeloyl-CoA from pimelate: step 1/1.</text>
</comment>
<comment type="subunit">
    <text evidence="1">Homodimer.</text>
</comment>
<comment type="similarity">
    <text evidence="1">Belongs to the BioW family.</text>
</comment>
<organism>
    <name type="scientific">Corynebacterium pseudotuberculosis (strain FRC41)</name>
    <dbReference type="NCBI Taxonomy" id="765874"/>
    <lineage>
        <taxon>Bacteria</taxon>
        <taxon>Bacillati</taxon>
        <taxon>Actinomycetota</taxon>
        <taxon>Actinomycetes</taxon>
        <taxon>Mycobacteriales</taxon>
        <taxon>Corynebacteriaceae</taxon>
        <taxon>Corynebacterium</taxon>
    </lineage>
</organism>
<name>BIOW_CORPF</name>
<protein>
    <recommendedName>
        <fullName evidence="1">6-carboxyhexanoate--CoA ligase</fullName>
        <ecNumber evidence="1">6.2.1.14</ecNumber>
    </recommendedName>
    <alternativeName>
        <fullName evidence="1">Pimeloyl-CoA synthase</fullName>
    </alternativeName>
</protein>
<gene>
    <name evidence="1" type="primary">bioW</name>
    <name type="ordered locus">cpfrc_01183</name>
</gene>
<reference key="1">
    <citation type="journal article" date="2010" name="BMC Genomics">
        <title>The complete genome sequence of Corynebacterium pseudotuberculosis FRC41 isolated from a 12-year-old girl with necrotizing lymphadenitis reveals insights into gene-regulatory networks contributing to virulence.</title>
        <authorList>
            <person name="Trost E."/>
            <person name="Ott L."/>
            <person name="Schneider J."/>
            <person name="Schroder J."/>
            <person name="Jaenicke S."/>
            <person name="Goesmann A."/>
            <person name="Husemann P."/>
            <person name="Stoye J."/>
            <person name="Dorella F.A."/>
            <person name="Rocha F.S."/>
            <person name="Soares Sde C."/>
            <person name="D'Afonseca V."/>
            <person name="Miyoshi A."/>
            <person name="Ruiz J."/>
            <person name="Silva A."/>
            <person name="Azevedo V."/>
            <person name="Burkovski A."/>
            <person name="Guiso N."/>
            <person name="Join-Lambert O.F."/>
            <person name="Kayal S."/>
            <person name="Tauch A."/>
        </authorList>
    </citation>
    <scope>NUCLEOTIDE SEQUENCE [LARGE SCALE GENOMIC DNA]</scope>
    <source>
        <strain>FRC41</strain>
    </source>
</reference>
<proteinExistence type="inferred from homology"/>
<sequence length="243" mass="26613">MTFYSVRMRASLQGQHISGAETLVSCPTDVPRLTAQFVERAMNHAKGVPDAITTKIESIPESDIQRVPRLLTREYQARDCHDAHGFVQQQLTTVCSAEVAQKAVDLLLTIRNMRGAILLDAHSARRLEPDHNRGIRASNFGDASSISAKPDNKEIGISKNHYHEALILSSKVMSAPGIIAEICISDDPDYTTGYVSLNGVYTRVHTMKRLGSPLGGRVFILDSEKASVATAINHIENTPVLIL</sequence>
<keyword id="KW-0067">ATP-binding</keyword>
<keyword id="KW-0093">Biotin biosynthesis</keyword>
<keyword id="KW-0436">Ligase</keyword>
<keyword id="KW-0460">Magnesium</keyword>
<keyword id="KW-0547">Nucleotide-binding</keyword>
<feature type="chain" id="PRO_0000412083" description="6-carboxyhexanoate--CoA ligase">
    <location>
        <begin position="1"/>
        <end position="243"/>
    </location>
</feature>